<evidence type="ECO:0000250" key="1"/>
<evidence type="ECO:0000255" key="2"/>
<evidence type="ECO:0000255" key="3">
    <source>
        <dbReference type="PROSITE-ProRule" id="PRU00096"/>
    </source>
</evidence>
<evidence type="ECO:0000269" key="4">
    <source>
    </source>
</evidence>
<evidence type="ECO:0000305" key="5"/>
<feature type="signal peptide" evidence="2">
    <location>
        <begin position="1"/>
        <end position="21"/>
    </location>
</feature>
<feature type="chain" id="PRO_0000010411" description="Protein ERP4">
    <location>
        <begin position="22"/>
        <end position="207"/>
    </location>
</feature>
<feature type="topological domain" description="Lumenal" evidence="2">
    <location>
        <begin position="22"/>
        <end position="174"/>
    </location>
</feature>
<feature type="transmembrane region" description="Helical" evidence="2">
    <location>
        <begin position="175"/>
        <end position="195"/>
    </location>
</feature>
<feature type="topological domain" description="Cytoplasmic" evidence="2">
    <location>
        <begin position="196"/>
        <end position="207"/>
    </location>
</feature>
<feature type="domain" description="GOLD" evidence="3">
    <location>
        <begin position="36"/>
        <end position="118"/>
    </location>
</feature>
<sequence>MRVFTLIAILFSSSLLTHAFSSNYAPVGISLPAFTKECLYYDLSSDKDVLVVSYQVLTGGNFEIDFDITAPDGSVIVTERQKKHSDFLLKSFGIGKYTFCLSNNYGTSPKKVEITLEKEKEIVSSHESKEDIIANNAIEEIDRNLNKITKTMDYLRAREWRNMYTVSSTESRLTWLSLLIMGVMVGISIVQALIIQFFFTSRQKNYV</sequence>
<name>ERP4_YEAST</name>
<gene>
    <name type="primary">ERP4</name>
    <name type="ordered locus">YOR016C</name>
</gene>
<organism>
    <name type="scientific">Saccharomyces cerevisiae (strain ATCC 204508 / S288c)</name>
    <name type="common">Baker's yeast</name>
    <dbReference type="NCBI Taxonomy" id="559292"/>
    <lineage>
        <taxon>Eukaryota</taxon>
        <taxon>Fungi</taxon>
        <taxon>Dikarya</taxon>
        <taxon>Ascomycota</taxon>
        <taxon>Saccharomycotina</taxon>
        <taxon>Saccharomycetes</taxon>
        <taxon>Saccharomycetales</taxon>
        <taxon>Saccharomycetaceae</taxon>
        <taxon>Saccharomyces</taxon>
    </lineage>
</organism>
<comment type="function">
    <text evidence="1">Involved in vesicular protein trafficking.</text>
</comment>
<comment type="interaction">
    <interactant intactId="EBI-6598">
        <id>Q12450</id>
    </interactant>
    <interactant intactId="EBI-6431">
        <id>P32803</id>
        <label>EMP24</label>
    </interactant>
    <organismsDiffer>false</organismsDiffer>
    <experiments>4</experiments>
</comment>
<comment type="interaction">
    <interactant intactId="EBI-6598">
        <id>Q12450</id>
    </interactant>
    <interactant intactId="EBI-6581">
        <id>Q05359</id>
        <label>ERP1</label>
    </interactant>
    <organismsDiffer>false</organismsDiffer>
    <experiments>4</experiments>
</comment>
<comment type="interaction">
    <interactant intactId="EBI-6598">
        <id>Q12450</id>
    </interactant>
    <interactant intactId="EBI-6587">
        <id>P39704</id>
        <label>ERP2</label>
    </interactant>
    <organismsDiffer>false</organismsDiffer>
    <experiments>3</experiments>
</comment>
<comment type="interaction">
    <interactant intactId="EBI-6598">
        <id>Q12450</id>
    </interactant>
    <interactant intactId="EBI-2058104">
        <id>P53198</id>
        <label>ERP6</label>
    </interactant>
    <organismsDiffer>false</organismsDiffer>
    <experiments>3</experiments>
</comment>
<comment type="interaction">
    <interactant intactId="EBI-6598">
        <id>Q12450</id>
    </interactant>
    <interactant intactId="EBI-6642">
        <id>P54837</id>
        <label>ERV25</label>
    </interactant>
    <organismsDiffer>false</organismsDiffer>
    <experiments>3</experiments>
</comment>
<comment type="interaction">
    <interactant intactId="EBI-6598">
        <id>Q12450</id>
    </interactant>
    <interactant intactId="EBI-23662">
        <id>P53337</id>
        <label>ERV29</label>
    </interactant>
    <organismsDiffer>false</organismsDiffer>
    <experiments>3</experiments>
</comment>
<comment type="subcellular location">
    <subcellularLocation>
        <location evidence="1">Endoplasmic reticulum membrane</location>
        <topology evidence="1">Single-pass type I membrane protein</topology>
    </subcellularLocation>
</comment>
<comment type="miscellaneous">
    <text evidence="4">Present with 2710 molecules/cell in log phase SD medium.</text>
</comment>
<comment type="similarity">
    <text evidence="5">Belongs to the EMP24/GP25L family.</text>
</comment>
<proteinExistence type="evidence at protein level"/>
<protein>
    <recommendedName>
        <fullName>Protein ERP4</fullName>
    </recommendedName>
</protein>
<dbReference type="EMBL" id="X87331">
    <property type="protein sequence ID" value="CAA60765.1"/>
    <property type="molecule type" value="Genomic_DNA"/>
</dbReference>
<dbReference type="EMBL" id="Z74924">
    <property type="protein sequence ID" value="CAA99206.1"/>
    <property type="molecule type" value="Genomic_DNA"/>
</dbReference>
<dbReference type="EMBL" id="AY693089">
    <property type="protein sequence ID" value="AAT93108.1"/>
    <property type="molecule type" value="Genomic_DNA"/>
</dbReference>
<dbReference type="EMBL" id="BK006948">
    <property type="protein sequence ID" value="DAA10798.1"/>
    <property type="molecule type" value="Genomic_DNA"/>
</dbReference>
<dbReference type="PIR" id="S54622">
    <property type="entry name" value="S54622"/>
</dbReference>
<dbReference type="RefSeq" id="NP_014659.1">
    <property type="nucleotide sequence ID" value="NM_001183435.1"/>
</dbReference>
<dbReference type="SMR" id="Q12450"/>
<dbReference type="BioGRID" id="34420">
    <property type="interactions" value="180"/>
</dbReference>
<dbReference type="DIP" id="DIP-7868N"/>
<dbReference type="FunCoup" id="Q12450">
    <property type="interactions" value="227"/>
</dbReference>
<dbReference type="IntAct" id="Q12450">
    <property type="interactions" value="44"/>
</dbReference>
<dbReference type="MINT" id="Q12450"/>
<dbReference type="STRING" id="4932.YOR016C"/>
<dbReference type="PaxDb" id="4932-YOR016C"/>
<dbReference type="PeptideAtlas" id="Q12450"/>
<dbReference type="EnsemblFungi" id="YOR016C_mRNA">
    <property type="protein sequence ID" value="YOR016C"/>
    <property type="gene ID" value="YOR016C"/>
</dbReference>
<dbReference type="GeneID" id="854181"/>
<dbReference type="KEGG" id="sce:YOR016C"/>
<dbReference type="AGR" id="SGD:S000005542"/>
<dbReference type="SGD" id="S000005542">
    <property type="gene designation" value="ERP4"/>
</dbReference>
<dbReference type="VEuPathDB" id="FungiDB:YOR016C"/>
<dbReference type="eggNOG" id="KOG1693">
    <property type="taxonomic scope" value="Eukaryota"/>
</dbReference>
<dbReference type="GeneTree" id="ENSGT00940000166069"/>
<dbReference type="HOGENOM" id="CLU_066963_4_2_1"/>
<dbReference type="InParanoid" id="Q12450"/>
<dbReference type="OMA" id="NAEDCFY"/>
<dbReference type="OrthoDB" id="1929172at2759"/>
<dbReference type="BioCyc" id="YEAST:G3O-33564-MONOMER"/>
<dbReference type="Reactome" id="R-SCE-6807878">
    <property type="pathway name" value="COPI-mediated anterograde transport"/>
</dbReference>
<dbReference type="Reactome" id="R-SCE-6811434">
    <property type="pathway name" value="COPI-dependent Golgi-to-ER retrograde traffic"/>
</dbReference>
<dbReference type="BioGRID-ORCS" id="854181">
    <property type="hits" value="0 hits in 10 CRISPR screens"/>
</dbReference>
<dbReference type="PRO" id="PR:Q12450"/>
<dbReference type="Proteomes" id="UP000002311">
    <property type="component" value="Chromosome XV"/>
</dbReference>
<dbReference type="RNAct" id="Q12450">
    <property type="molecule type" value="protein"/>
</dbReference>
<dbReference type="GO" id="GO:0030134">
    <property type="term" value="C:COPII-coated ER to Golgi transport vesicle"/>
    <property type="evidence" value="ECO:0000318"/>
    <property type="project" value="GO_Central"/>
</dbReference>
<dbReference type="GO" id="GO:0005783">
    <property type="term" value="C:endoplasmic reticulum"/>
    <property type="evidence" value="ECO:0007005"/>
    <property type="project" value="SGD"/>
</dbReference>
<dbReference type="GO" id="GO:0005789">
    <property type="term" value="C:endoplasmic reticulum membrane"/>
    <property type="evidence" value="ECO:0007669"/>
    <property type="project" value="UniProtKB-SubCell"/>
</dbReference>
<dbReference type="GO" id="GO:0005793">
    <property type="term" value="C:endoplasmic reticulum-Golgi intermediate compartment"/>
    <property type="evidence" value="ECO:0000318"/>
    <property type="project" value="GO_Central"/>
</dbReference>
<dbReference type="GO" id="GO:0005794">
    <property type="term" value="C:Golgi apparatus"/>
    <property type="evidence" value="ECO:0000318"/>
    <property type="project" value="GO_Central"/>
</dbReference>
<dbReference type="GO" id="GO:0016020">
    <property type="term" value="C:membrane"/>
    <property type="evidence" value="ECO:0000255"/>
    <property type="project" value="SGD"/>
</dbReference>
<dbReference type="GO" id="GO:0006888">
    <property type="term" value="P:endoplasmic reticulum to Golgi vesicle-mediated transport"/>
    <property type="evidence" value="ECO:0000316"/>
    <property type="project" value="SGD"/>
</dbReference>
<dbReference type="GO" id="GO:0007030">
    <property type="term" value="P:Golgi organization"/>
    <property type="evidence" value="ECO:0000318"/>
    <property type="project" value="GO_Central"/>
</dbReference>
<dbReference type="GO" id="GO:0006886">
    <property type="term" value="P:intracellular protein transport"/>
    <property type="evidence" value="ECO:0000318"/>
    <property type="project" value="GO_Central"/>
</dbReference>
<dbReference type="GO" id="GO:0006621">
    <property type="term" value="P:protein retention in ER lumen"/>
    <property type="evidence" value="ECO:0000318"/>
    <property type="project" value="GO_Central"/>
</dbReference>
<dbReference type="InterPro" id="IPR015720">
    <property type="entry name" value="Emp24-like"/>
</dbReference>
<dbReference type="InterPro" id="IPR009038">
    <property type="entry name" value="GOLD_dom"/>
</dbReference>
<dbReference type="InterPro" id="IPR036598">
    <property type="entry name" value="GOLD_dom_sf"/>
</dbReference>
<dbReference type="PANTHER" id="PTHR22811">
    <property type="entry name" value="TRANSMEMBRANE EMP24 DOMAIN-CONTAINING PROTEIN"/>
    <property type="match status" value="1"/>
</dbReference>
<dbReference type="Pfam" id="PF01105">
    <property type="entry name" value="EMP24_GP25L"/>
    <property type="match status" value="1"/>
</dbReference>
<dbReference type="SMART" id="SM01190">
    <property type="entry name" value="EMP24_GP25L"/>
    <property type="match status" value="1"/>
</dbReference>
<dbReference type="SUPFAM" id="SSF101576">
    <property type="entry name" value="Supernatant protein factor (SPF), C-terminal domain"/>
    <property type="match status" value="1"/>
</dbReference>
<dbReference type="PROSITE" id="PS50866">
    <property type="entry name" value="GOLD"/>
    <property type="match status" value="1"/>
</dbReference>
<reference key="1">
    <citation type="journal article" date="1997" name="Nature">
        <title>The nucleotide sequence of Saccharomyces cerevisiae chromosome XV.</title>
        <authorList>
            <person name="Dujon B."/>
            <person name="Albermann K."/>
            <person name="Aldea M."/>
            <person name="Alexandraki D."/>
            <person name="Ansorge W."/>
            <person name="Arino J."/>
            <person name="Benes V."/>
            <person name="Bohn C."/>
            <person name="Bolotin-Fukuhara M."/>
            <person name="Bordonne R."/>
            <person name="Boyer J."/>
            <person name="Camasses A."/>
            <person name="Casamayor A."/>
            <person name="Casas C."/>
            <person name="Cheret G."/>
            <person name="Cziepluch C."/>
            <person name="Daignan-Fornier B."/>
            <person name="Dang V.-D."/>
            <person name="de Haan M."/>
            <person name="Delius H."/>
            <person name="Durand P."/>
            <person name="Fairhead C."/>
            <person name="Feldmann H."/>
            <person name="Gaillon L."/>
            <person name="Galisson F."/>
            <person name="Gamo F.-J."/>
            <person name="Gancedo C."/>
            <person name="Goffeau A."/>
            <person name="Goulding S.E."/>
            <person name="Grivell L.A."/>
            <person name="Habbig B."/>
            <person name="Hand N.J."/>
            <person name="Hani J."/>
            <person name="Hattenhorst U."/>
            <person name="Hebling U."/>
            <person name="Hernando Y."/>
            <person name="Herrero E."/>
            <person name="Heumann K."/>
            <person name="Hiesel R."/>
            <person name="Hilger F."/>
            <person name="Hofmann B."/>
            <person name="Hollenberg C.P."/>
            <person name="Hughes B."/>
            <person name="Jauniaux J.-C."/>
            <person name="Kalogeropoulos A."/>
            <person name="Katsoulou C."/>
            <person name="Kordes E."/>
            <person name="Lafuente M.J."/>
            <person name="Landt O."/>
            <person name="Louis E.J."/>
            <person name="Maarse A.C."/>
            <person name="Madania A."/>
            <person name="Mannhaupt G."/>
            <person name="Marck C."/>
            <person name="Martin R.P."/>
            <person name="Mewes H.-W."/>
            <person name="Michaux G."/>
            <person name="Paces V."/>
            <person name="Parle-McDermott A.G."/>
            <person name="Pearson B.M."/>
            <person name="Perrin A."/>
            <person name="Pettersson B."/>
            <person name="Poch O."/>
            <person name="Pohl T.M."/>
            <person name="Poirey R."/>
            <person name="Portetelle D."/>
            <person name="Pujol A."/>
            <person name="Purnelle B."/>
            <person name="Ramezani Rad M."/>
            <person name="Rechmann S."/>
            <person name="Schwager C."/>
            <person name="Schweizer M."/>
            <person name="Sor F."/>
            <person name="Sterky F."/>
            <person name="Tarassov I.A."/>
            <person name="Teodoru C."/>
            <person name="Tettelin H."/>
            <person name="Thierry A."/>
            <person name="Tobiasch E."/>
            <person name="Tzermia M."/>
            <person name="Uhlen M."/>
            <person name="Unseld M."/>
            <person name="Valens M."/>
            <person name="Vandenbol M."/>
            <person name="Vetter I."/>
            <person name="Vlcek C."/>
            <person name="Voet M."/>
            <person name="Volckaert G."/>
            <person name="Voss H."/>
            <person name="Wambutt R."/>
            <person name="Wedler H."/>
            <person name="Wiemann S."/>
            <person name="Winsor B."/>
            <person name="Wolfe K.H."/>
            <person name="Zollner A."/>
            <person name="Zumstein E."/>
            <person name="Kleine K."/>
        </authorList>
    </citation>
    <scope>NUCLEOTIDE SEQUENCE [LARGE SCALE GENOMIC DNA]</scope>
    <source>
        <strain>ATCC 204508 / S288c</strain>
    </source>
</reference>
<reference key="2">
    <citation type="journal article" date="2014" name="G3 (Bethesda)">
        <title>The reference genome sequence of Saccharomyces cerevisiae: Then and now.</title>
        <authorList>
            <person name="Engel S.R."/>
            <person name="Dietrich F.S."/>
            <person name="Fisk D.G."/>
            <person name="Binkley G."/>
            <person name="Balakrishnan R."/>
            <person name="Costanzo M.C."/>
            <person name="Dwight S.S."/>
            <person name="Hitz B.C."/>
            <person name="Karra K."/>
            <person name="Nash R.S."/>
            <person name="Weng S."/>
            <person name="Wong E.D."/>
            <person name="Lloyd P."/>
            <person name="Skrzypek M.S."/>
            <person name="Miyasato S.R."/>
            <person name="Simison M."/>
            <person name="Cherry J.M."/>
        </authorList>
    </citation>
    <scope>GENOME REANNOTATION</scope>
    <source>
        <strain>ATCC 204508 / S288c</strain>
    </source>
</reference>
<reference key="3">
    <citation type="journal article" date="2007" name="Genome Res.">
        <title>Approaching a complete repository of sequence-verified protein-encoding clones for Saccharomyces cerevisiae.</title>
        <authorList>
            <person name="Hu Y."/>
            <person name="Rolfs A."/>
            <person name="Bhullar B."/>
            <person name="Murthy T.V.S."/>
            <person name="Zhu C."/>
            <person name="Berger M.F."/>
            <person name="Camargo A.A."/>
            <person name="Kelley F."/>
            <person name="McCarron S."/>
            <person name="Jepson D."/>
            <person name="Richardson A."/>
            <person name="Raphael J."/>
            <person name="Moreira D."/>
            <person name="Taycher E."/>
            <person name="Zuo D."/>
            <person name="Mohr S."/>
            <person name="Kane M.F."/>
            <person name="Williamson J."/>
            <person name="Simpson A.J.G."/>
            <person name="Bulyk M.L."/>
            <person name="Harlow E."/>
            <person name="Marsischky G."/>
            <person name="Kolodner R.D."/>
            <person name="LaBaer J."/>
        </authorList>
    </citation>
    <scope>NUCLEOTIDE SEQUENCE [GENOMIC DNA]</scope>
    <source>
        <strain>ATCC 204508 / S288c</strain>
    </source>
</reference>
<reference key="4">
    <citation type="journal article" date="1999" name="Mol. Biol. Cell">
        <title>Erp1p and Erp2p, partners for Emp24p and Erv25p in a yeast p24 complex.</title>
        <authorList>
            <person name="Marzioch M."/>
            <person name="Henthorn D.C."/>
            <person name="Herrmann J.M."/>
            <person name="Wilson R."/>
            <person name="Thomas D.Y."/>
            <person name="Bergeron J.J.M."/>
            <person name="Solari R.C."/>
            <person name="Rowley A."/>
        </authorList>
    </citation>
    <scope>GENE NAME</scope>
</reference>
<reference key="5">
    <citation type="journal article" date="2003" name="Nature">
        <title>Global analysis of protein expression in yeast.</title>
        <authorList>
            <person name="Ghaemmaghami S."/>
            <person name="Huh W.-K."/>
            <person name="Bower K."/>
            <person name="Howson R.W."/>
            <person name="Belle A."/>
            <person name="Dephoure N."/>
            <person name="O'Shea E.K."/>
            <person name="Weissman J.S."/>
        </authorList>
    </citation>
    <scope>LEVEL OF PROTEIN EXPRESSION [LARGE SCALE ANALYSIS]</scope>
</reference>
<accession>Q12450</accession>
<accession>D6W282</accession>
<keyword id="KW-0256">Endoplasmic reticulum</keyword>
<keyword id="KW-0931">ER-Golgi transport</keyword>
<keyword id="KW-0472">Membrane</keyword>
<keyword id="KW-0653">Protein transport</keyword>
<keyword id="KW-1185">Reference proteome</keyword>
<keyword id="KW-0732">Signal</keyword>
<keyword id="KW-0812">Transmembrane</keyword>
<keyword id="KW-1133">Transmembrane helix</keyword>
<keyword id="KW-0813">Transport</keyword>